<protein>
    <recommendedName>
        <fullName evidence="1">UPF0473 protein SSU98_0068</fullName>
    </recommendedName>
</protein>
<feature type="chain" id="PRO_0000304871" description="UPF0473 protein SSU98_0068">
    <location>
        <begin position="1"/>
        <end position="106"/>
    </location>
</feature>
<dbReference type="EMBL" id="CP000408">
    <property type="protein sequence ID" value="ABP91228.1"/>
    <property type="molecule type" value="Genomic_DNA"/>
</dbReference>
<dbReference type="KEGG" id="ssv:SSU98_0068"/>
<dbReference type="HOGENOM" id="CLU_146610_2_1_9"/>
<dbReference type="BioCyc" id="SSUI391296:GI2E-87-MONOMER"/>
<dbReference type="HAMAP" id="MF_01448">
    <property type="entry name" value="UPF0473"/>
    <property type="match status" value="1"/>
</dbReference>
<dbReference type="InterPro" id="IPR009711">
    <property type="entry name" value="UPF0473"/>
</dbReference>
<dbReference type="NCBIfam" id="NF010215">
    <property type="entry name" value="PRK13678.1-2"/>
    <property type="match status" value="1"/>
</dbReference>
<dbReference type="NCBIfam" id="NF010217">
    <property type="entry name" value="PRK13678.1-4"/>
    <property type="match status" value="1"/>
</dbReference>
<dbReference type="PANTHER" id="PTHR40066">
    <property type="entry name" value="UPF0473 PROTEIN CBO2561/CLC_2432"/>
    <property type="match status" value="1"/>
</dbReference>
<dbReference type="PANTHER" id="PTHR40066:SF1">
    <property type="entry name" value="UPF0473 PROTEIN CBO2561_CLC_2432"/>
    <property type="match status" value="1"/>
</dbReference>
<dbReference type="Pfam" id="PF06949">
    <property type="entry name" value="DUF1292"/>
    <property type="match status" value="1"/>
</dbReference>
<gene>
    <name type="ordered locus">SSU98_0068</name>
</gene>
<organism>
    <name type="scientific">Streptococcus suis (strain 98HAH33)</name>
    <dbReference type="NCBI Taxonomy" id="391296"/>
    <lineage>
        <taxon>Bacteria</taxon>
        <taxon>Bacillati</taxon>
        <taxon>Bacillota</taxon>
        <taxon>Bacilli</taxon>
        <taxon>Lactobacillales</taxon>
        <taxon>Streptococcaceae</taxon>
        <taxon>Streptococcus</taxon>
    </lineage>
</organism>
<sequence length="106" mass="12257">MAHHHDHEHDHNHDERELITLVDDQGNETLFEILLTIDGQEEFGKNYVLLIPASAEEDENGEVEIQAYSYIENENGTEGDLQPIPEDATAEWDMIEEVFNSFMEEE</sequence>
<reference key="1">
    <citation type="journal article" date="2007" name="PLoS ONE">
        <title>A glimpse of streptococcal toxic shock syndrome from comparative genomics of S. suis 2 Chinese isolates.</title>
        <authorList>
            <person name="Chen C."/>
            <person name="Tang J."/>
            <person name="Dong W."/>
            <person name="Wang C."/>
            <person name="Feng Y."/>
            <person name="Wang J."/>
            <person name="Zheng F."/>
            <person name="Pan X."/>
            <person name="Liu D."/>
            <person name="Li M."/>
            <person name="Song Y."/>
            <person name="Zhu X."/>
            <person name="Sun H."/>
            <person name="Feng T."/>
            <person name="Guo Z."/>
            <person name="Ju A."/>
            <person name="Ge J."/>
            <person name="Dong Y."/>
            <person name="Sun W."/>
            <person name="Jiang Y."/>
            <person name="Wang J."/>
            <person name="Yan J."/>
            <person name="Yang H."/>
            <person name="Wang X."/>
            <person name="Gao G.F."/>
            <person name="Yang R."/>
            <person name="Wang J."/>
            <person name="Yu J."/>
        </authorList>
    </citation>
    <scope>NUCLEOTIDE SEQUENCE [LARGE SCALE GENOMIC DNA]</scope>
    <source>
        <strain>98HAH33</strain>
    </source>
</reference>
<proteinExistence type="inferred from homology"/>
<accession>A4VYN9</accession>
<comment type="similarity">
    <text evidence="1">Belongs to the UPF0473 family.</text>
</comment>
<evidence type="ECO:0000255" key="1">
    <source>
        <dbReference type="HAMAP-Rule" id="MF_01448"/>
    </source>
</evidence>
<name>Y068_STRS2</name>